<accession>Q6LQ58</accession>
<protein>
    <recommendedName>
        <fullName evidence="1">Formimidoylglutamase</fullName>
        <ecNumber evidence="1">3.5.3.8</ecNumber>
    </recommendedName>
    <alternativeName>
        <fullName evidence="1">Formiminoglutamase</fullName>
    </alternativeName>
    <alternativeName>
        <fullName evidence="1">Formiminoglutamate hydrolase</fullName>
    </alternativeName>
</protein>
<sequence>MPNNQLSNATISNTINMSAWQGRTDPEDGELGMRWHQKVLPADQANEEGIMLLGFACDAGVARNKGRTGAYGAPIAIRRALANLAWHHQEPVYDGGDISCDDGNLELAQHRLGEDVCLALRQKHKVIVFGGGHEMAWGTFQGIGAYLLQKQEATESIKAPLNLSEEKTAEPNVKGTAIPTPRVGIINFDAHFDLRNPPSGPQASAGSSGTPFHQIARFCELQHWPFNYACLGLNRGSNTQALYEKADRLGVLYRDDTELTHRTIEQTQAALNTFIAECDYLYLTIDLDVFPACVAPGVSAPAARGVSLEIIEQLMEPILTAKTEQGDSKLLVADLAEYNPRFDIDNQTARLAARLTWTIARAIR</sequence>
<feature type="chain" id="PRO_0000258254" description="Formimidoylglutamase">
    <location>
        <begin position="1"/>
        <end position="364"/>
    </location>
</feature>
<feature type="binding site" evidence="1">
    <location>
        <position position="133"/>
    </location>
    <ligand>
        <name>Mn(2+)</name>
        <dbReference type="ChEBI" id="CHEBI:29035"/>
        <label>1</label>
    </ligand>
</feature>
<feature type="binding site" evidence="1">
    <location>
        <position position="189"/>
    </location>
    <ligand>
        <name>Mn(2+)</name>
        <dbReference type="ChEBI" id="CHEBI:29035"/>
        <label>1</label>
    </ligand>
</feature>
<feature type="binding site" evidence="1">
    <location>
        <position position="189"/>
    </location>
    <ligand>
        <name>Mn(2+)</name>
        <dbReference type="ChEBI" id="CHEBI:29035"/>
        <label>2</label>
    </ligand>
</feature>
<feature type="binding site" evidence="1">
    <location>
        <position position="191"/>
    </location>
    <ligand>
        <name>Mn(2+)</name>
        <dbReference type="ChEBI" id="CHEBI:29035"/>
        <label>2</label>
    </ligand>
</feature>
<feature type="binding site" evidence="1">
    <location>
        <position position="193"/>
    </location>
    <ligand>
        <name>Mn(2+)</name>
        <dbReference type="ChEBI" id="CHEBI:29035"/>
        <label>1</label>
    </ligand>
</feature>
<feature type="binding site" evidence="1">
    <location>
        <position position="286"/>
    </location>
    <ligand>
        <name>Mn(2+)</name>
        <dbReference type="ChEBI" id="CHEBI:29035"/>
        <label>1</label>
    </ligand>
</feature>
<feature type="binding site" evidence="1">
    <location>
        <position position="286"/>
    </location>
    <ligand>
        <name>Mn(2+)</name>
        <dbReference type="ChEBI" id="CHEBI:29035"/>
        <label>2</label>
    </ligand>
</feature>
<feature type="binding site" evidence="1">
    <location>
        <position position="288"/>
    </location>
    <ligand>
        <name>Mn(2+)</name>
        <dbReference type="ChEBI" id="CHEBI:29035"/>
        <label>2</label>
    </ligand>
</feature>
<reference key="1">
    <citation type="journal article" date="2005" name="Science">
        <title>Life at depth: Photobacterium profundum genome sequence and expression analysis.</title>
        <authorList>
            <person name="Vezzi A."/>
            <person name="Campanaro S."/>
            <person name="D'Angelo M."/>
            <person name="Simonato F."/>
            <person name="Vitulo N."/>
            <person name="Lauro F.M."/>
            <person name="Cestaro A."/>
            <person name="Malacrida G."/>
            <person name="Simionati B."/>
            <person name="Cannata N."/>
            <person name="Romualdi C."/>
            <person name="Bartlett D.H."/>
            <person name="Valle G."/>
        </authorList>
    </citation>
    <scope>NUCLEOTIDE SEQUENCE [LARGE SCALE GENOMIC DNA]</scope>
    <source>
        <strain>ATCC BAA-1253 / SS9</strain>
    </source>
</reference>
<comment type="function">
    <text evidence="1">Catalyzes the conversion of N-formimidoyl-L-glutamate to L-glutamate and formamide.</text>
</comment>
<comment type="catalytic activity">
    <reaction evidence="1">
        <text>N-formimidoyl-L-glutamate + H2O = formamide + L-glutamate</text>
        <dbReference type="Rhea" id="RHEA:22492"/>
        <dbReference type="ChEBI" id="CHEBI:15377"/>
        <dbReference type="ChEBI" id="CHEBI:16397"/>
        <dbReference type="ChEBI" id="CHEBI:29985"/>
        <dbReference type="ChEBI" id="CHEBI:58928"/>
        <dbReference type="EC" id="3.5.3.8"/>
    </reaction>
</comment>
<comment type="cofactor">
    <cofactor evidence="1">
        <name>Mn(2+)</name>
        <dbReference type="ChEBI" id="CHEBI:29035"/>
    </cofactor>
    <text evidence="1">Binds 2 manganese ions per subunit.</text>
</comment>
<comment type="pathway">
    <text evidence="1">Amino-acid degradation; L-histidine degradation into L-glutamate; L-glutamate from N-formimidoyl-L-glutamate (hydrolase route): step 1/1.</text>
</comment>
<comment type="similarity">
    <text evidence="1">Belongs to the arginase family.</text>
</comment>
<evidence type="ECO:0000255" key="1">
    <source>
        <dbReference type="HAMAP-Rule" id="MF_00737"/>
    </source>
</evidence>
<dbReference type="EC" id="3.5.3.8" evidence="1"/>
<dbReference type="EMBL" id="CR378670">
    <property type="protein sequence ID" value="CAG20568.1"/>
    <property type="molecule type" value="Genomic_DNA"/>
</dbReference>
<dbReference type="RefSeq" id="WP_011218859.1">
    <property type="nucleotide sequence ID" value="NC_006370.1"/>
</dbReference>
<dbReference type="SMR" id="Q6LQ58"/>
<dbReference type="STRING" id="298386.PBPRA2171"/>
<dbReference type="KEGG" id="ppr:PBPRA2171"/>
<dbReference type="eggNOG" id="COG0010">
    <property type="taxonomic scope" value="Bacteria"/>
</dbReference>
<dbReference type="HOGENOM" id="CLU_039478_2_0_6"/>
<dbReference type="UniPathway" id="UPA00379">
    <property type="reaction ID" value="UER00552"/>
</dbReference>
<dbReference type="Proteomes" id="UP000000593">
    <property type="component" value="Chromosome 1"/>
</dbReference>
<dbReference type="GO" id="GO:0008783">
    <property type="term" value="F:agmatinase activity"/>
    <property type="evidence" value="ECO:0007669"/>
    <property type="project" value="TreeGrafter"/>
</dbReference>
<dbReference type="GO" id="GO:0050415">
    <property type="term" value="F:formimidoylglutamase activity"/>
    <property type="evidence" value="ECO:0007669"/>
    <property type="project" value="UniProtKB-UniRule"/>
</dbReference>
<dbReference type="GO" id="GO:0030145">
    <property type="term" value="F:manganese ion binding"/>
    <property type="evidence" value="ECO:0007669"/>
    <property type="project" value="UniProtKB-UniRule"/>
</dbReference>
<dbReference type="GO" id="GO:0019556">
    <property type="term" value="P:L-histidine catabolic process to glutamate and formamide"/>
    <property type="evidence" value="ECO:0007669"/>
    <property type="project" value="UniProtKB-UniPathway"/>
</dbReference>
<dbReference type="GO" id="GO:0019557">
    <property type="term" value="P:L-histidine catabolic process to glutamate and formate"/>
    <property type="evidence" value="ECO:0007669"/>
    <property type="project" value="UniProtKB-UniPathway"/>
</dbReference>
<dbReference type="GO" id="GO:0033389">
    <property type="term" value="P:putrescine biosynthetic process from arginine, via agmatine"/>
    <property type="evidence" value="ECO:0007669"/>
    <property type="project" value="TreeGrafter"/>
</dbReference>
<dbReference type="CDD" id="cd09988">
    <property type="entry name" value="Formimidoylglutamase"/>
    <property type="match status" value="1"/>
</dbReference>
<dbReference type="Gene3D" id="3.40.800.10">
    <property type="entry name" value="Ureohydrolase domain"/>
    <property type="match status" value="1"/>
</dbReference>
<dbReference type="HAMAP" id="MF_00737">
    <property type="entry name" value="Formimidoylglutam"/>
    <property type="match status" value="1"/>
</dbReference>
<dbReference type="InterPro" id="IPR005923">
    <property type="entry name" value="HutG"/>
</dbReference>
<dbReference type="InterPro" id="IPR006035">
    <property type="entry name" value="Ureohydrolase"/>
</dbReference>
<dbReference type="InterPro" id="IPR023696">
    <property type="entry name" value="Ureohydrolase_dom_sf"/>
</dbReference>
<dbReference type="InterPro" id="IPR020855">
    <property type="entry name" value="Ureohydrolase_Mn_BS"/>
</dbReference>
<dbReference type="PANTHER" id="PTHR11358">
    <property type="entry name" value="ARGINASE/AGMATINASE"/>
    <property type="match status" value="1"/>
</dbReference>
<dbReference type="PANTHER" id="PTHR11358:SF35">
    <property type="entry name" value="FORMIMIDOYLGLUTAMASE"/>
    <property type="match status" value="1"/>
</dbReference>
<dbReference type="Pfam" id="PF00491">
    <property type="entry name" value="Arginase"/>
    <property type="match status" value="1"/>
</dbReference>
<dbReference type="PIRSF" id="PIRSF036979">
    <property type="entry name" value="Arginase"/>
    <property type="match status" value="1"/>
</dbReference>
<dbReference type="SUPFAM" id="SSF52768">
    <property type="entry name" value="Arginase/deacetylase"/>
    <property type="match status" value="1"/>
</dbReference>
<dbReference type="PROSITE" id="PS01053">
    <property type="entry name" value="ARGINASE_1"/>
    <property type="match status" value="1"/>
</dbReference>
<dbReference type="PROSITE" id="PS51409">
    <property type="entry name" value="ARGINASE_2"/>
    <property type="match status" value="1"/>
</dbReference>
<keyword id="KW-0369">Histidine metabolism</keyword>
<keyword id="KW-0378">Hydrolase</keyword>
<keyword id="KW-0464">Manganese</keyword>
<keyword id="KW-0479">Metal-binding</keyword>
<keyword id="KW-1185">Reference proteome</keyword>
<proteinExistence type="inferred from homology"/>
<gene>
    <name evidence="1" type="primary">hutG</name>
    <name type="ordered locus">PBPRA2171</name>
</gene>
<name>HUTG_PHOPR</name>
<organism>
    <name type="scientific">Photobacterium profundum (strain SS9)</name>
    <dbReference type="NCBI Taxonomy" id="298386"/>
    <lineage>
        <taxon>Bacteria</taxon>
        <taxon>Pseudomonadati</taxon>
        <taxon>Pseudomonadota</taxon>
        <taxon>Gammaproteobacteria</taxon>
        <taxon>Vibrionales</taxon>
        <taxon>Vibrionaceae</taxon>
        <taxon>Photobacterium</taxon>
    </lineage>
</organism>